<dbReference type="EMBL" id="CP001402">
    <property type="protein sequence ID" value="ACR42407.1"/>
    <property type="molecule type" value="Genomic_DNA"/>
</dbReference>
<dbReference type="RefSeq" id="WP_012711733.1">
    <property type="nucleotide sequence ID" value="NC_012726.1"/>
</dbReference>
<dbReference type="SMR" id="C4KIJ3"/>
<dbReference type="GeneID" id="84062108"/>
<dbReference type="KEGG" id="sid:M164_1804"/>
<dbReference type="HOGENOM" id="CLU_1792160_0_0_2"/>
<dbReference type="Proteomes" id="UP000001479">
    <property type="component" value="Chromosome"/>
</dbReference>
<dbReference type="GO" id="GO:0005737">
    <property type="term" value="C:cytoplasm"/>
    <property type="evidence" value="ECO:0007669"/>
    <property type="project" value="UniProtKB-SubCell"/>
</dbReference>
<dbReference type="GO" id="GO:0016272">
    <property type="term" value="C:prefoldin complex"/>
    <property type="evidence" value="ECO:0007669"/>
    <property type="project" value="UniProtKB-UniRule"/>
</dbReference>
<dbReference type="GO" id="GO:0051082">
    <property type="term" value="F:unfolded protein binding"/>
    <property type="evidence" value="ECO:0007669"/>
    <property type="project" value="UniProtKB-UniRule"/>
</dbReference>
<dbReference type="GO" id="GO:0006457">
    <property type="term" value="P:protein folding"/>
    <property type="evidence" value="ECO:0007669"/>
    <property type="project" value="UniProtKB-UniRule"/>
</dbReference>
<dbReference type="CDD" id="cd00584">
    <property type="entry name" value="Prefoldin_alpha"/>
    <property type="match status" value="1"/>
</dbReference>
<dbReference type="FunFam" id="1.10.287.370:FF:000019">
    <property type="entry name" value="Prefoldin subunit alpha"/>
    <property type="match status" value="1"/>
</dbReference>
<dbReference type="Gene3D" id="1.10.287.370">
    <property type="match status" value="1"/>
</dbReference>
<dbReference type="HAMAP" id="MF_00308">
    <property type="entry name" value="PfdA"/>
    <property type="match status" value="1"/>
</dbReference>
<dbReference type="InterPro" id="IPR011599">
    <property type="entry name" value="PFD_alpha_archaea"/>
</dbReference>
<dbReference type="InterPro" id="IPR009053">
    <property type="entry name" value="Prefoldin"/>
</dbReference>
<dbReference type="InterPro" id="IPR004127">
    <property type="entry name" value="Prefoldin_subunit_alpha"/>
</dbReference>
<dbReference type="NCBIfam" id="TIGR00293">
    <property type="entry name" value="prefoldin subunit alpha"/>
    <property type="match status" value="1"/>
</dbReference>
<dbReference type="PANTHER" id="PTHR12674">
    <property type="entry name" value="PREFOLDIN SUBUNIT 5"/>
    <property type="match status" value="1"/>
</dbReference>
<dbReference type="PANTHER" id="PTHR12674:SF2">
    <property type="entry name" value="PREFOLDIN SUBUNIT 5"/>
    <property type="match status" value="1"/>
</dbReference>
<dbReference type="Pfam" id="PF02996">
    <property type="entry name" value="Prefoldin"/>
    <property type="match status" value="1"/>
</dbReference>
<dbReference type="SUPFAM" id="SSF46579">
    <property type="entry name" value="Prefoldin"/>
    <property type="match status" value="1"/>
</dbReference>
<evidence type="ECO:0000255" key="1">
    <source>
        <dbReference type="HAMAP-Rule" id="MF_00308"/>
    </source>
</evidence>
<feature type="chain" id="PRO_1000205026" description="Prefoldin subunit alpha">
    <location>
        <begin position="1"/>
        <end position="147"/>
    </location>
</feature>
<organism>
    <name type="scientific">Saccharolobus islandicus (strain M.16.4 / Kamchatka #3)</name>
    <name type="common">Sulfolobus islandicus</name>
    <dbReference type="NCBI Taxonomy" id="426118"/>
    <lineage>
        <taxon>Archaea</taxon>
        <taxon>Thermoproteota</taxon>
        <taxon>Thermoprotei</taxon>
        <taxon>Sulfolobales</taxon>
        <taxon>Sulfolobaceae</taxon>
        <taxon>Saccharolobus</taxon>
    </lineage>
</organism>
<sequence length="147" mass="16282">MSQGQGGITLDDLIAQADYLKRYIDSLQRTQLELLESINSIDSAKQAIETIKSGNKEMLVFIDRKGYLLAKVGGIVGDKVTVHLGLSYYAEVDLDSAIKILDKRKDEISKAAQNLNNELQKAASTYNQIVDILNQIQQAAARRQQGE</sequence>
<reference key="1">
    <citation type="journal article" date="2009" name="Proc. Natl. Acad. Sci. U.S.A.">
        <title>Biogeography of the Sulfolobus islandicus pan-genome.</title>
        <authorList>
            <person name="Reno M.L."/>
            <person name="Held N.L."/>
            <person name="Fields C.J."/>
            <person name="Burke P.V."/>
            <person name="Whitaker R.J."/>
        </authorList>
    </citation>
    <scope>NUCLEOTIDE SEQUENCE [LARGE SCALE GENOMIC DNA]</scope>
    <source>
        <strain>M.16.4 / Kamchatka #3</strain>
    </source>
</reference>
<comment type="function">
    <text evidence="1">Molecular chaperone capable of stabilizing a range of proteins. Seems to fulfill an ATP-independent, HSP70-like function in archaeal de novo protein folding.</text>
</comment>
<comment type="subunit">
    <text evidence="1">Heterohexamer of two alpha and four beta subunits.</text>
</comment>
<comment type="subcellular location">
    <subcellularLocation>
        <location evidence="1">Cytoplasm</location>
    </subcellularLocation>
</comment>
<comment type="similarity">
    <text evidence="1">Belongs to the prefoldin alpha subunit family.</text>
</comment>
<proteinExistence type="inferred from homology"/>
<keyword id="KW-0143">Chaperone</keyword>
<keyword id="KW-0963">Cytoplasm</keyword>
<protein>
    <recommendedName>
        <fullName evidence="1">Prefoldin subunit alpha</fullName>
    </recommendedName>
    <alternativeName>
        <fullName evidence="1">GimC subunit alpha</fullName>
    </alternativeName>
</protein>
<accession>C4KIJ3</accession>
<gene>
    <name evidence="1" type="primary">pfdA</name>
    <name type="ordered locus">M164_1804</name>
</gene>
<name>PFDA_SACI6</name>